<name>KLRB1_MOUSE</name>
<gene>
    <name type="primary">Klrb1</name>
    <name type="synonym">Gm4696</name>
    <name type="synonym">Klrb1d</name>
    <name type="synonym">Klrb1g</name>
    <name evidence="4" type="synonym">Klrb6</name>
    <name evidence="5" type="synonym">Nkrp1g</name>
</gene>
<evidence type="ECO:0000255" key="1"/>
<evidence type="ECO:0000255" key="2">
    <source>
        <dbReference type="PROSITE-ProRule" id="PRU00040"/>
    </source>
</evidence>
<evidence type="ECO:0000305" key="3"/>
<evidence type="ECO:0000312" key="4">
    <source>
        <dbReference type="EMBL" id="ABA41355.1"/>
    </source>
</evidence>
<evidence type="ECO:0000312" key="5">
    <source>
        <dbReference type="EMBL" id="ABC71751.1"/>
    </source>
</evidence>
<comment type="subcellular location">
    <subcellularLocation>
        <location evidence="1">Membrane</location>
        <topology evidence="1">Single-pass type II membrane protein</topology>
    </subcellularLocation>
</comment>
<reference evidence="4" key="1">
    <citation type="submission" date="2005-06" db="EMBL/GenBank/DDBJ databases">
        <title>Gene homogenization of exons encoding the ligand binding parts of regulatory leukocyte receptors.</title>
        <authorList>
            <person name="Fossum S."/>
            <person name="Flornes L.M."/>
            <person name="Saether P.C."/>
            <person name="Dissen E."/>
        </authorList>
    </citation>
    <scope>NUCLEOTIDE SEQUENCE [MRNA]</scope>
    <source>
        <strain evidence="4">C57BL/6J</strain>
    </source>
</reference>
<reference evidence="3 5" key="2">
    <citation type="journal article" date="2006" name="J. Immunol.">
        <title>Molecular and genetic basis for strain-dependent NK1.1 alloreactivity of mouse NK cells.</title>
        <authorList>
            <person name="Carlyle J.R."/>
            <person name="Mesci A."/>
            <person name="Ljutic B."/>
            <person name="Belanger S."/>
            <person name="Tai L.-H."/>
            <person name="Rousselle E."/>
            <person name="Troke A.D."/>
            <person name="Proteau M.-F."/>
            <person name="Makrigiannis A.P."/>
        </authorList>
    </citation>
    <scope>NUCLEOTIDE SEQUENCE [GENOMIC DNA] OF 60-174</scope>
    <source>
        <strain evidence="5">BALB/cJ</strain>
    </source>
</reference>
<feature type="chain" id="PRO_0000317213" description="Killer cell lectin-like receptor subfamily B member 1">
    <location>
        <begin position="1"/>
        <end position="214"/>
    </location>
</feature>
<feature type="topological domain" description="Cytoplasmic" evidence="1">
    <location>
        <begin position="1"/>
        <end position="42"/>
    </location>
</feature>
<feature type="transmembrane region" description="Helical; Signal-anchor for type II membrane protein" evidence="1">
    <location>
        <begin position="43"/>
        <end position="63"/>
    </location>
</feature>
<feature type="topological domain" description="Extracellular" evidence="1">
    <location>
        <begin position="64"/>
        <end position="214"/>
    </location>
</feature>
<feature type="domain" description="C-type lectin" evidence="2">
    <location>
        <begin position="98"/>
        <end position="208"/>
    </location>
</feature>
<feature type="disulfide bond" evidence="2">
    <location>
        <begin position="119"/>
        <end position="207"/>
    </location>
</feature>
<feature type="disulfide bond" evidence="2">
    <location>
        <begin position="186"/>
        <end position="199"/>
    </location>
</feature>
<dbReference type="EMBL" id="DQ113419">
    <property type="protein sequence ID" value="ABA41355.1"/>
    <property type="molecule type" value="mRNA"/>
</dbReference>
<dbReference type="EMBL" id="DQ336141">
    <property type="protein sequence ID" value="ABC71751.1"/>
    <property type="molecule type" value="Genomic_DNA"/>
</dbReference>
<dbReference type="CCDS" id="CCDS39653.1"/>
<dbReference type="RefSeq" id="NP_001093388.1">
    <property type="nucleotide sequence ID" value="NM_001099918.2"/>
</dbReference>
<dbReference type="SMR" id="Q0ZUP1"/>
<dbReference type="FunCoup" id="Q0ZUP1">
    <property type="interactions" value="141"/>
</dbReference>
<dbReference type="STRING" id="10090.ENSMUSP00000107738"/>
<dbReference type="jPOST" id="Q0ZUP1"/>
<dbReference type="PaxDb" id="10090-ENSMUSP00000107738"/>
<dbReference type="DNASU" id="100043861"/>
<dbReference type="Ensembl" id="ENSMUST00000112110.4">
    <property type="protein sequence ID" value="ENSMUSP00000107738.3"/>
    <property type="gene ID" value="ENSMUSG00000079299.4"/>
</dbReference>
<dbReference type="GeneID" id="100043861"/>
<dbReference type="KEGG" id="mmu:100043861"/>
<dbReference type="UCSC" id="uc009eem.1">
    <property type="organism name" value="mouse"/>
</dbReference>
<dbReference type="AGR" id="MGI:96877"/>
<dbReference type="CTD" id="3820"/>
<dbReference type="MGI" id="MGI:96877">
    <property type="gene designation" value="Klrb1"/>
</dbReference>
<dbReference type="VEuPathDB" id="HostDB:ENSMUSG00000079299"/>
<dbReference type="eggNOG" id="KOG4297">
    <property type="taxonomic scope" value="Eukaryota"/>
</dbReference>
<dbReference type="GeneTree" id="ENSGT00940000154685"/>
<dbReference type="HOGENOM" id="CLU_049894_8_2_1"/>
<dbReference type="InParanoid" id="Q0ZUP1"/>
<dbReference type="OMA" id="WHRVALK"/>
<dbReference type="OrthoDB" id="538816at2759"/>
<dbReference type="PhylomeDB" id="Q0ZUP1"/>
<dbReference type="TreeFam" id="TF337735"/>
<dbReference type="BioGRID-ORCS" id="100043861">
    <property type="hits" value="3 hits in 77 CRISPR screens"/>
</dbReference>
<dbReference type="ChiTaRS" id="Klrb1b">
    <property type="organism name" value="mouse"/>
</dbReference>
<dbReference type="PRO" id="PR:Q0ZUP1"/>
<dbReference type="Proteomes" id="UP000000589">
    <property type="component" value="Chromosome 6"/>
</dbReference>
<dbReference type="RNAct" id="Q0ZUP1">
    <property type="molecule type" value="protein"/>
</dbReference>
<dbReference type="Bgee" id="ENSMUSG00000079299">
    <property type="expression patterns" value="Expressed in animal zygote and 25 other cell types or tissues"/>
</dbReference>
<dbReference type="ExpressionAtlas" id="Q0ZUP1">
    <property type="expression patterns" value="baseline and differential"/>
</dbReference>
<dbReference type="GO" id="GO:0016020">
    <property type="term" value="C:membrane"/>
    <property type="evidence" value="ECO:0007669"/>
    <property type="project" value="UniProtKB-SubCell"/>
</dbReference>
<dbReference type="GO" id="GO:0030246">
    <property type="term" value="F:carbohydrate binding"/>
    <property type="evidence" value="ECO:0007669"/>
    <property type="project" value="UniProtKB-KW"/>
</dbReference>
<dbReference type="GO" id="GO:0038023">
    <property type="term" value="F:signaling receptor activity"/>
    <property type="evidence" value="ECO:0000314"/>
    <property type="project" value="MGI"/>
</dbReference>
<dbReference type="CDD" id="cd03593">
    <property type="entry name" value="CLECT_NK_receptors_like"/>
    <property type="match status" value="1"/>
</dbReference>
<dbReference type="Gene3D" id="3.10.100.10">
    <property type="entry name" value="Mannose-Binding Protein A, subunit A"/>
    <property type="match status" value="1"/>
</dbReference>
<dbReference type="InterPro" id="IPR001304">
    <property type="entry name" value="C-type_lectin-like"/>
</dbReference>
<dbReference type="InterPro" id="IPR016186">
    <property type="entry name" value="C-type_lectin-like/link_sf"/>
</dbReference>
<dbReference type="InterPro" id="IPR016187">
    <property type="entry name" value="CTDL_fold"/>
</dbReference>
<dbReference type="InterPro" id="IPR051527">
    <property type="entry name" value="KLR_subfamily_B"/>
</dbReference>
<dbReference type="InterPro" id="IPR033992">
    <property type="entry name" value="NKR-like_CTLD"/>
</dbReference>
<dbReference type="PANTHER" id="PTHR46784">
    <property type="entry name" value="KILLER CELL LECTIN-LIKE RECEPTOR SUBFAMILY B MEMBER 1"/>
    <property type="match status" value="1"/>
</dbReference>
<dbReference type="PANTHER" id="PTHR46784:SF2">
    <property type="entry name" value="KILLER CELL LECTIN-LIKE RECEPTOR SUBFAMILY B MEMBER 1"/>
    <property type="match status" value="1"/>
</dbReference>
<dbReference type="Pfam" id="PF00059">
    <property type="entry name" value="Lectin_C"/>
    <property type="match status" value="1"/>
</dbReference>
<dbReference type="SMART" id="SM00034">
    <property type="entry name" value="CLECT"/>
    <property type="match status" value="1"/>
</dbReference>
<dbReference type="SUPFAM" id="SSF56436">
    <property type="entry name" value="C-type lectin-like"/>
    <property type="match status" value="1"/>
</dbReference>
<dbReference type="PROSITE" id="PS50041">
    <property type="entry name" value="C_TYPE_LECTIN_2"/>
    <property type="match status" value="1"/>
</dbReference>
<proteinExistence type="evidence at transcript level"/>
<organism>
    <name type="scientific">Mus musculus</name>
    <name type="common">Mouse</name>
    <dbReference type="NCBI Taxonomy" id="10090"/>
    <lineage>
        <taxon>Eukaryota</taxon>
        <taxon>Metazoa</taxon>
        <taxon>Chordata</taxon>
        <taxon>Craniata</taxon>
        <taxon>Vertebrata</taxon>
        <taxon>Euteleostomi</taxon>
        <taxon>Mammalia</taxon>
        <taxon>Eutheria</taxon>
        <taxon>Euarchontoglires</taxon>
        <taxon>Glires</taxon>
        <taxon>Rodentia</taxon>
        <taxon>Myomorpha</taxon>
        <taxon>Muroidea</taxon>
        <taxon>Muridae</taxon>
        <taxon>Murinae</taxon>
        <taxon>Mus</taxon>
        <taxon>Mus</taxon>
    </lineage>
</organism>
<keyword id="KW-1015">Disulfide bond</keyword>
<keyword id="KW-0430">Lectin</keyword>
<keyword id="KW-0472">Membrane</keyword>
<keyword id="KW-1185">Reference proteome</keyword>
<keyword id="KW-0735">Signal-anchor</keyword>
<keyword id="KW-0812">Transmembrane</keyword>
<keyword id="KW-1133">Transmembrane helix</keyword>
<protein>
    <recommendedName>
        <fullName>Killer cell lectin-like receptor subfamily B member 1</fullName>
    </recommendedName>
    <alternativeName>
        <fullName>Killer cell lectin-like receptor subfamily B member 1G</fullName>
    </alternativeName>
    <alternativeName>
        <fullName>Natural killer cell surface protein NKR-P1G</fullName>
    </alternativeName>
    <alternativeName>
        <fullName>Natural killer lectin-like receptor 1E</fullName>
    </alternativeName>
</protein>
<sequence length="214" mass="23909">MDAPVLYAELNLAETRGLRCTSAPSLPQDACQGPGWHRVALKLGCAGLIFLLMVLSVLVGFLVQKPLIEKCSVAVQENRTEPTGRSATLECPRDWHPHCDKCLFTSQTSRPWADGLVDCNLKGATLLLIQDEEELRLLQNFSKGKGQQFYIGLKYEEVDKVWKWMNGSILNTNLLQITGKDEENSCALISQTEVFSDSCSSDNHWICQKTLKHV</sequence>
<accession>Q0ZUP1</accession>
<accession>Q1A4F6</accession>